<accession>P65197</accession>
<accession>Q8XFS0</accession>
<keyword id="KW-0997">Cell inner membrane</keyword>
<keyword id="KW-1003">Cell membrane</keyword>
<keyword id="KW-0472">Membrane</keyword>
<keyword id="KW-1185">Reference proteome</keyword>
<keyword id="KW-0812">Transmembrane</keyword>
<keyword id="KW-1133">Transmembrane helix</keyword>
<name>YCIB_SALTY</name>
<comment type="function">
    <text evidence="1">Plays a role in cell envelope biogenesis, maintenance of cell envelope integrity and membrane homeostasis.</text>
</comment>
<comment type="subcellular location">
    <subcellularLocation>
        <location evidence="1">Cell inner membrane</location>
        <topology evidence="1">Multi-pass membrane protein</topology>
    </subcellularLocation>
</comment>
<comment type="similarity">
    <text evidence="1">Belongs to the YciB family.</text>
</comment>
<gene>
    <name evidence="1" type="primary">yciB</name>
    <name type="ordered locus">STM1735</name>
</gene>
<reference key="1">
    <citation type="journal article" date="2001" name="Nature">
        <title>Complete genome sequence of Salmonella enterica serovar Typhimurium LT2.</title>
        <authorList>
            <person name="McClelland M."/>
            <person name="Sanderson K.E."/>
            <person name="Spieth J."/>
            <person name="Clifton S.W."/>
            <person name="Latreille P."/>
            <person name="Courtney L."/>
            <person name="Porwollik S."/>
            <person name="Ali J."/>
            <person name="Dante M."/>
            <person name="Du F."/>
            <person name="Hou S."/>
            <person name="Layman D."/>
            <person name="Leonard S."/>
            <person name="Nguyen C."/>
            <person name="Scott K."/>
            <person name="Holmes A."/>
            <person name="Grewal N."/>
            <person name="Mulvaney E."/>
            <person name="Ryan E."/>
            <person name="Sun H."/>
            <person name="Florea L."/>
            <person name="Miller W."/>
            <person name="Stoneking T."/>
            <person name="Nhan M."/>
            <person name="Waterston R."/>
            <person name="Wilson R.K."/>
        </authorList>
    </citation>
    <scope>NUCLEOTIDE SEQUENCE [LARGE SCALE GENOMIC DNA]</scope>
    <source>
        <strain>LT2 / SGSC1412 / ATCC 700720</strain>
    </source>
</reference>
<organism>
    <name type="scientific">Salmonella typhimurium (strain LT2 / SGSC1412 / ATCC 700720)</name>
    <dbReference type="NCBI Taxonomy" id="99287"/>
    <lineage>
        <taxon>Bacteria</taxon>
        <taxon>Pseudomonadati</taxon>
        <taxon>Pseudomonadota</taxon>
        <taxon>Gammaproteobacteria</taxon>
        <taxon>Enterobacterales</taxon>
        <taxon>Enterobacteriaceae</taxon>
        <taxon>Salmonella</taxon>
    </lineage>
</organism>
<dbReference type="EMBL" id="AE006468">
    <property type="protein sequence ID" value="AAL20653.1"/>
    <property type="molecule type" value="Genomic_DNA"/>
</dbReference>
<dbReference type="RefSeq" id="NP_460694.1">
    <property type="nucleotide sequence ID" value="NC_003197.2"/>
</dbReference>
<dbReference type="RefSeq" id="WP_000808682.1">
    <property type="nucleotide sequence ID" value="NC_003197.2"/>
</dbReference>
<dbReference type="STRING" id="99287.STM1735"/>
<dbReference type="PaxDb" id="99287-STM1735"/>
<dbReference type="GeneID" id="1253254"/>
<dbReference type="KEGG" id="stm:STM1735"/>
<dbReference type="PATRIC" id="fig|99287.12.peg.1831"/>
<dbReference type="HOGENOM" id="CLU_089554_2_0_6"/>
<dbReference type="OMA" id="VWRTQST"/>
<dbReference type="PhylomeDB" id="P65197"/>
<dbReference type="BioCyc" id="SENT99287:STM1735-MONOMER"/>
<dbReference type="Proteomes" id="UP000001014">
    <property type="component" value="Chromosome"/>
</dbReference>
<dbReference type="GO" id="GO:0005886">
    <property type="term" value="C:plasma membrane"/>
    <property type="evidence" value="ECO:0000318"/>
    <property type="project" value="GO_Central"/>
</dbReference>
<dbReference type="HAMAP" id="MF_00189">
    <property type="entry name" value="YciB"/>
    <property type="match status" value="1"/>
</dbReference>
<dbReference type="InterPro" id="IPR006008">
    <property type="entry name" value="YciB"/>
</dbReference>
<dbReference type="NCBIfam" id="TIGR00997">
    <property type="entry name" value="ispZ"/>
    <property type="match status" value="1"/>
</dbReference>
<dbReference type="NCBIfam" id="NF001324">
    <property type="entry name" value="PRK00259.1-2"/>
    <property type="match status" value="1"/>
</dbReference>
<dbReference type="NCBIfam" id="NF001325">
    <property type="entry name" value="PRK00259.1-3"/>
    <property type="match status" value="1"/>
</dbReference>
<dbReference type="NCBIfam" id="NF001326">
    <property type="entry name" value="PRK00259.1-4"/>
    <property type="match status" value="1"/>
</dbReference>
<dbReference type="PANTHER" id="PTHR36917:SF1">
    <property type="entry name" value="INNER MEMBRANE-SPANNING PROTEIN YCIB"/>
    <property type="match status" value="1"/>
</dbReference>
<dbReference type="PANTHER" id="PTHR36917">
    <property type="entry name" value="INTRACELLULAR SEPTATION PROTEIN A-RELATED"/>
    <property type="match status" value="1"/>
</dbReference>
<dbReference type="Pfam" id="PF04279">
    <property type="entry name" value="IspA"/>
    <property type="match status" value="1"/>
</dbReference>
<evidence type="ECO:0000255" key="1">
    <source>
        <dbReference type="HAMAP-Rule" id="MF_00189"/>
    </source>
</evidence>
<feature type="chain" id="PRO_0000206547" description="Inner membrane-spanning protein YciB">
    <location>
        <begin position="1"/>
        <end position="179"/>
    </location>
</feature>
<feature type="transmembrane region" description="Helical" evidence="1">
    <location>
        <begin position="22"/>
        <end position="42"/>
    </location>
</feature>
<feature type="transmembrane region" description="Helical" evidence="1">
    <location>
        <begin position="50"/>
        <end position="70"/>
    </location>
</feature>
<feature type="transmembrane region" description="Helical" evidence="1">
    <location>
        <begin position="76"/>
        <end position="96"/>
    </location>
</feature>
<feature type="transmembrane region" description="Helical" evidence="1">
    <location>
        <begin position="121"/>
        <end position="141"/>
    </location>
</feature>
<feature type="transmembrane region" description="Helical" evidence="1">
    <location>
        <begin position="149"/>
        <end position="169"/>
    </location>
</feature>
<protein>
    <recommendedName>
        <fullName evidence="1">Inner membrane-spanning protein YciB</fullName>
    </recommendedName>
</protein>
<proteinExistence type="inferred from homology"/>
<sequence>MKQFLDFLPLVVFFAFYKLYDIYAATSALIVATAIVLIYSWVRYRKIEKMALITFVLVAVFGGLTLFFHNDEFIKWKVTVIYALFAGALLISQWVMKKPLIQRMLGKELALPQQVWSKLNLAWALFFIACGLANIYIAFWLPQNIWVNFKVFGLTALTLIFTLLSGVYIYRHLPQEDKS</sequence>